<reference key="1">
    <citation type="journal article" date="2009" name="J. Bacteriol.">
        <title>Complete genome sequence and comparative genome analysis of enteropathogenic Escherichia coli O127:H6 strain E2348/69.</title>
        <authorList>
            <person name="Iguchi A."/>
            <person name="Thomson N.R."/>
            <person name="Ogura Y."/>
            <person name="Saunders D."/>
            <person name="Ooka T."/>
            <person name="Henderson I.R."/>
            <person name="Harris D."/>
            <person name="Asadulghani M."/>
            <person name="Kurokawa K."/>
            <person name="Dean P."/>
            <person name="Kenny B."/>
            <person name="Quail M.A."/>
            <person name="Thurston S."/>
            <person name="Dougan G."/>
            <person name="Hayashi T."/>
            <person name="Parkhill J."/>
            <person name="Frankel G."/>
        </authorList>
    </citation>
    <scope>NUCLEOTIDE SEQUENCE [LARGE SCALE GENOMIC DNA]</scope>
    <source>
        <strain>E2348/69 / EPEC</strain>
    </source>
</reference>
<name>RLMN_ECO27</name>
<gene>
    <name evidence="1" type="primary">rlmN</name>
    <name type="ordered locus">E2348C_2800</name>
</gene>
<keyword id="KW-0004">4Fe-4S</keyword>
<keyword id="KW-0963">Cytoplasm</keyword>
<keyword id="KW-1015">Disulfide bond</keyword>
<keyword id="KW-0408">Iron</keyword>
<keyword id="KW-0411">Iron-sulfur</keyword>
<keyword id="KW-0479">Metal-binding</keyword>
<keyword id="KW-0489">Methyltransferase</keyword>
<keyword id="KW-1185">Reference proteome</keyword>
<keyword id="KW-0698">rRNA processing</keyword>
<keyword id="KW-0949">S-adenosyl-L-methionine</keyword>
<keyword id="KW-0808">Transferase</keyword>
<keyword id="KW-0819">tRNA processing</keyword>
<organism>
    <name type="scientific">Escherichia coli O127:H6 (strain E2348/69 / EPEC)</name>
    <dbReference type="NCBI Taxonomy" id="574521"/>
    <lineage>
        <taxon>Bacteria</taxon>
        <taxon>Pseudomonadati</taxon>
        <taxon>Pseudomonadota</taxon>
        <taxon>Gammaproteobacteria</taxon>
        <taxon>Enterobacterales</taxon>
        <taxon>Enterobacteriaceae</taxon>
        <taxon>Escherichia</taxon>
    </lineage>
</organism>
<comment type="function">
    <text evidence="1">Specifically methylates position 2 of adenine 2503 in 23S rRNA and position 2 of adenine 37 in tRNAs. m2A2503 modification seems to play a crucial role in the proofreading step occurring at the peptidyl transferase center and thus would serve to optimize ribosomal fidelity.</text>
</comment>
<comment type="catalytic activity">
    <reaction evidence="1">
        <text>adenosine(2503) in 23S rRNA + 2 reduced [2Fe-2S]-[ferredoxin] + 2 S-adenosyl-L-methionine = 2-methyladenosine(2503) in 23S rRNA + 5'-deoxyadenosine + L-methionine + 2 oxidized [2Fe-2S]-[ferredoxin] + S-adenosyl-L-homocysteine</text>
        <dbReference type="Rhea" id="RHEA:42916"/>
        <dbReference type="Rhea" id="RHEA-COMP:10000"/>
        <dbReference type="Rhea" id="RHEA-COMP:10001"/>
        <dbReference type="Rhea" id="RHEA-COMP:10152"/>
        <dbReference type="Rhea" id="RHEA-COMP:10282"/>
        <dbReference type="ChEBI" id="CHEBI:17319"/>
        <dbReference type="ChEBI" id="CHEBI:33737"/>
        <dbReference type="ChEBI" id="CHEBI:33738"/>
        <dbReference type="ChEBI" id="CHEBI:57844"/>
        <dbReference type="ChEBI" id="CHEBI:57856"/>
        <dbReference type="ChEBI" id="CHEBI:59789"/>
        <dbReference type="ChEBI" id="CHEBI:74411"/>
        <dbReference type="ChEBI" id="CHEBI:74497"/>
        <dbReference type="EC" id="2.1.1.192"/>
    </reaction>
</comment>
<comment type="catalytic activity">
    <reaction evidence="1">
        <text>adenosine(37) in tRNA + 2 reduced [2Fe-2S]-[ferredoxin] + 2 S-adenosyl-L-methionine = 2-methyladenosine(37) in tRNA + 5'-deoxyadenosine + L-methionine + 2 oxidized [2Fe-2S]-[ferredoxin] + S-adenosyl-L-homocysteine</text>
        <dbReference type="Rhea" id="RHEA:43332"/>
        <dbReference type="Rhea" id="RHEA-COMP:10000"/>
        <dbReference type="Rhea" id="RHEA-COMP:10001"/>
        <dbReference type="Rhea" id="RHEA-COMP:10162"/>
        <dbReference type="Rhea" id="RHEA-COMP:10485"/>
        <dbReference type="ChEBI" id="CHEBI:17319"/>
        <dbReference type="ChEBI" id="CHEBI:33737"/>
        <dbReference type="ChEBI" id="CHEBI:33738"/>
        <dbReference type="ChEBI" id="CHEBI:57844"/>
        <dbReference type="ChEBI" id="CHEBI:57856"/>
        <dbReference type="ChEBI" id="CHEBI:59789"/>
        <dbReference type="ChEBI" id="CHEBI:74411"/>
        <dbReference type="ChEBI" id="CHEBI:74497"/>
        <dbReference type="EC" id="2.1.1.192"/>
    </reaction>
</comment>
<comment type="cofactor">
    <cofactor evidence="1">
        <name>[4Fe-4S] cluster</name>
        <dbReference type="ChEBI" id="CHEBI:49883"/>
    </cofactor>
    <text evidence="1">Binds 1 [4Fe-4S] cluster. The cluster is coordinated with 3 cysteines and an exchangeable S-adenosyl-L-methionine.</text>
</comment>
<comment type="subcellular location">
    <subcellularLocation>
        <location evidence="1">Cytoplasm</location>
    </subcellularLocation>
</comment>
<comment type="miscellaneous">
    <text evidence="1">Reaction proceeds by a ping-pong mechanism involving intermediate methylation of a conserved cysteine residue.</text>
</comment>
<comment type="similarity">
    <text evidence="1">Belongs to the radical SAM superfamily. RlmN family.</text>
</comment>
<accession>B7UGW3</accession>
<protein>
    <recommendedName>
        <fullName evidence="1">Dual-specificity RNA methyltransferase RlmN</fullName>
        <ecNumber evidence="1">2.1.1.192</ecNumber>
    </recommendedName>
    <alternativeName>
        <fullName evidence="1">23S rRNA (adenine(2503)-C(2))-methyltransferase</fullName>
    </alternativeName>
    <alternativeName>
        <fullName evidence="1">23S rRNA m2A2503 methyltransferase</fullName>
    </alternativeName>
    <alternativeName>
        <fullName evidence="1">Ribosomal RNA large subunit methyltransferase N</fullName>
    </alternativeName>
    <alternativeName>
        <fullName evidence="1">tRNA (adenine(37)-C(2))-methyltransferase</fullName>
    </alternativeName>
    <alternativeName>
        <fullName evidence="1">tRNA m2A37 methyltransferase</fullName>
    </alternativeName>
</protein>
<feature type="chain" id="PRO_1000188568" description="Dual-specificity RNA methyltransferase RlmN">
    <location>
        <begin position="1"/>
        <end position="384"/>
    </location>
</feature>
<feature type="domain" description="Radical SAM core" evidence="2">
    <location>
        <begin position="111"/>
        <end position="350"/>
    </location>
</feature>
<feature type="active site" description="Proton acceptor" evidence="1">
    <location>
        <position position="105"/>
    </location>
</feature>
<feature type="active site" description="S-methylcysteine intermediate" evidence="1">
    <location>
        <position position="355"/>
    </location>
</feature>
<feature type="binding site" evidence="1">
    <location>
        <position position="125"/>
    </location>
    <ligand>
        <name>[4Fe-4S] cluster</name>
        <dbReference type="ChEBI" id="CHEBI:49883"/>
        <note>4Fe-4S-S-AdoMet</note>
    </ligand>
</feature>
<feature type="binding site" evidence="1">
    <location>
        <position position="129"/>
    </location>
    <ligand>
        <name>[4Fe-4S] cluster</name>
        <dbReference type="ChEBI" id="CHEBI:49883"/>
        <note>4Fe-4S-S-AdoMet</note>
    </ligand>
</feature>
<feature type="binding site" evidence="1">
    <location>
        <position position="132"/>
    </location>
    <ligand>
        <name>[4Fe-4S] cluster</name>
        <dbReference type="ChEBI" id="CHEBI:49883"/>
        <note>4Fe-4S-S-AdoMet</note>
    </ligand>
</feature>
<feature type="binding site" evidence="1">
    <location>
        <begin position="179"/>
        <end position="180"/>
    </location>
    <ligand>
        <name>S-adenosyl-L-methionine</name>
        <dbReference type="ChEBI" id="CHEBI:59789"/>
    </ligand>
</feature>
<feature type="binding site" evidence="1">
    <location>
        <position position="211"/>
    </location>
    <ligand>
        <name>S-adenosyl-L-methionine</name>
        <dbReference type="ChEBI" id="CHEBI:59789"/>
    </ligand>
</feature>
<feature type="binding site" evidence="1">
    <location>
        <begin position="233"/>
        <end position="235"/>
    </location>
    <ligand>
        <name>S-adenosyl-L-methionine</name>
        <dbReference type="ChEBI" id="CHEBI:59789"/>
    </ligand>
</feature>
<feature type="binding site" evidence="1">
    <location>
        <position position="312"/>
    </location>
    <ligand>
        <name>S-adenosyl-L-methionine</name>
        <dbReference type="ChEBI" id="CHEBI:59789"/>
    </ligand>
</feature>
<feature type="disulfide bond" description="(transient)" evidence="1">
    <location>
        <begin position="118"/>
        <end position="355"/>
    </location>
</feature>
<proteinExistence type="inferred from homology"/>
<sequence length="384" mass="43086">MSEQLVTPENVTTKDGKINLLDLNRQQMREFFKDLGEKPFRADQVMKWMYHYCCDNFDEMTDINKVLRGKLKEVAEIRAPEVVEEQRSSDGTIKWAIAVGDQRVETVYIPEDDRATLCVSSQVGCALECKFCSTAQQGFNRNLRVSEIIGQVWRAAKIVGAAKVTGQRPITNVVMMGMGEPLLNLNNVVPAMEIMLDDFGFGLSKRRVTLSTSGVVPALDKLGDMIDVALAISLHAPNDEIRDEIVPINKKYNIETFLAAVRRYLEKSNANQGRVTIEYVMLDHVNDGTEHAHQLAELLKDTPCKINLIPWNPFPGAPYGRSSNSRIDRFSKVLMSYGFTTIVRKTRGDDIDAACGQLAGDVIDRTKRTLRKRMQGEAIDIKAV</sequence>
<dbReference type="EC" id="2.1.1.192" evidence="1"/>
<dbReference type="EMBL" id="FM180568">
    <property type="protein sequence ID" value="CAS10348.1"/>
    <property type="molecule type" value="Genomic_DNA"/>
</dbReference>
<dbReference type="RefSeq" id="WP_000003317.1">
    <property type="nucleotide sequence ID" value="NC_011601.1"/>
</dbReference>
<dbReference type="SMR" id="B7UGW3"/>
<dbReference type="KEGG" id="ecg:E2348C_2800"/>
<dbReference type="HOGENOM" id="CLU_029101_0_0_6"/>
<dbReference type="Proteomes" id="UP000008205">
    <property type="component" value="Chromosome"/>
</dbReference>
<dbReference type="GO" id="GO:0005737">
    <property type="term" value="C:cytoplasm"/>
    <property type="evidence" value="ECO:0007669"/>
    <property type="project" value="UniProtKB-SubCell"/>
</dbReference>
<dbReference type="GO" id="GO:0051539">
    <property type="term" value="F:4 iron, 4 sulfur cluster binding"/>
    <property type="evidence" value="ECO:0007669"/>
    <property type="project" value="UniProtKB-UniRule"/>
</dbReference>
<dbReference type="GO" id="GO:0046872">
    <property type="term" value="F:metal ion binding"/>
    <property type="evidence" value="ECO:0007669"/>
    <property type="project" value="UniProtKB-KW"/>
</dbReference>
<dbReference type="GO" id="GO:0070040">
    <property type="term" value="F:rRNA (adenine(2503)-C2-)-methyltransferase activity"/>
    <property type="evidence" value="ECO:0007669"/>
    <property type="project" value="UniProtKB-UniRule"/>
</dbReference>
<dbReference type="GO" id="GO:0019843">
    <property type="term" value="F:rRNA binding"/>
    <property type="evidence" value="ECO:0007669"/>
    <property type="project" value="UniProtKB-UniRule"/>
</dbReference>
<dbReference type="GO" id="GO:0002935">
    <property type="term" value="F:tRNA (adenine(37)-C2)-methyltransferase activity"/>
    <property type="evidence" value="ECO:0007669"/>
    <property type="project" value="UniProtKB-UniRule"/>
</dbReference>
<dbReference type="GO" id="GO:0000049">
    <property type="term" value="F:tRNA binding"/>
    <property type="evidence" value="ECO:0007669"/>
    <property type="project" value="UniProtKB-UniRule"/>
</dbReference>
<dbReference type="GO" id="GO:0070475">
    <property type="term" value="P:rRNA base methylation"/>
    <property type="evidence" value="ECO:0007669"/>
    <property type="project" value="UniProtKB-UniRule"/>
</dbReference>
<dbReference type="GO" id="GO:0030488">
    <property type="term" value="P:tRNA methylation"/>
    <property type="evidence" value="ECO:0007669"/>
    <property type="project" value="UniProtKB-UniRule"/>
</dbReference>
<dbReference type="CDD" id="cd01335">
    <property type="entry name" value="Radical_SAM"/>
    <property type="match status" value="1"/>
</dbReference>
<dbReference type="FunFam" id="1.10.150.530:FF:000001">
    <property type="entry name" value="Dual-specificity RNA methyltransferase RlmN"/>
    <property type="match status" value="1"/>
</dbReference>
<dbReference type="FunFam" id="3.20.20.70:FF:000008">
    <property type="entry name" value="Dual-specificity RNA methyltransferase RlmN"/>
    <property type="match status" value="1"/>
</dbReference>
<dbReference type="Gene3D" id="1.10.150.530">
    <property type="match status" value="1"/>
</dbReference>
<dbReference type="Gene3D" id="3.20.20.70">
    <property type="entry name" value="Aldolase class I"/>
    <property type="match status" value="1"/>
</dbReference>
<dbReference type="HAMAP" id="MF_01849">
    <property type="entry name" value="RNA_methyltr_RlmN"/>
    <property type="match status" value="1"/>
</dbReference>
<dbReference type="InterPro" id="IPR013785">
    <property type="entry name" value="Aldolase_TIM"/>
</dbReference>
<dbReference type="InterPro" id="IPR040072">
    <property type="entry name" value="Methyltransferase_A"/>
</dbReference>
<dbReference type="InterPro" id="IPR048641">
    <property type="entry name" value="RlmN_N"/>
</dbReference>
<dbReference type="InterPro" id="IPR027492">
    <property type="entry name" value="RNA_MTrfase_RlmN"/>
</dbReference>
<dbReference type="InterPro" id="IPR004383">
    <property type="entry name" value="rRNA_lsu_MTrfase_RlmN/Cfr"/>
</dbReference>
<dbReference type="InterPro" id="IPR007197">
    <property type="entry name" value="rSAM"/>
</dbReference>
<dbReference type="NCBIfam" id="NF008396">
    <property type="entry name" value="PRK11194.1"/>
    <property type="match status" value="1"/>
</dbReference>
<dbReference type="NCBIfam" id="TIGR00048">
    <property type="entry name" value="rRNA_mod_RlmN"/>
    <property type="match status" value="1"/>
</dbReference>
<dbReference type="PANTHER" id="PTHR30544">
    <property type="entry name" value="23S RRNA METHYLTRANSFERASE"/>
    <property type="match status" value="1"/>
</dbReference>
<dbReference type="PANTHER" id="PTHR30544:SF5">
    <property type="entry name" value="RADICAL SAM CORE DOMAIN-CONTAINING PROTEIN"/>
    <property type="match status" value="1"/>
</dbReference>
<dbReference type="Pfam" id="PF04055">
    <property type="entry name" value="Radical_SAM"/>
    <property type="match status" value="1"/>
</dbReference>
<dbReference type="Pfam" id="PF21016">
    <property type="entry name" value="RlmN_N"/>
    <property type="match status" value="1"/>
</dbReference>
<dbReference type="PIRSF" id="PIRSF006004">
    <property type="entry name" value="CHP00048"/>
    <property type="match status" value="1"/>
</dbReference>
<dbReference type="SFLD" id="SFLDF00275">
    <property type="entry name" value="adenosine_C2_methyltransferase"/>
    <property type="match status" value="1"/>
</dbReference>
<dbReference type="SFLD" id="SFLDG01062">
    <property type="entry name" value="methyltransferase_(Class_A)"/>
    <property type="match status" value="1"/>
</dbReference>
<dbReference type="SUPFAM" id="SSF102114">
    <property type="entry name" value="Radical SAM enzymes"/>
    <property type="match status" value="1"/>
</dbReference>
<dbReference type="PROSITE" id="PS51918">
    <property type="entry name" value="RADICAL_SAM"/>
    <property type="match status" value="1"/>
</dbReference>
<evidence type="ECO:0000255" key="1">
    <source>
        <dbReference type="HAMAP-Rule" id="MF_01849"/>
    </source>
</evidence>
<evidence type="ECO:0000255" key="2">
    <source>
        <dbReference type="PROSITE-ProRule" id="PRU01266"/>
    </source>
</evidence>